<proteinExistence type="inferred from homology"/>
<comment type="function">
    <text evidence="1">Binds 16S rRNA, required for the assembly of 30S particles and may also be responsible for determining the conformation of the 16S rRNA at the A site.</text>
</comment>
<comment type="subunit">
    <text evidence="1">Part of the 30S ribosomal subunit. Contacts proteins S3 and S10.</text>
</comment>
<comment type="similarity">
    <text evidence="1">Belongs to the universal ribosomal protein uS14 family.</text>
</comment>
<gene>
    <name evidence="1" type="primary">rpsN</name>
    <name type="synonym">rpsN2</name>
    <name type="ordered locus">MW1223</name>
</gene>
<feature type="chain" id="PRO_0000130937" description="Small ribosomal subunit protein uS14A">
    <location>
        <begin position="1"/>
        <end position="89"/>
    </location>
</feature>
<name>RS14_STAAW</name>
<evidence type="ECO:0000255" key="1">
    <source>
        <dbReference type="HAMAP-Rule" id="MF_00537"/>
    </source>
</evidence>
<evidence type="ECO:0000305" key="2"/>
<protein>
    <recommendedName>
        <fullName evidence="1">Small ribosomal subunit protein uS14A</fullName>
    </recommendedName>
    <alternativeName>
        <fullName evidence="2">30S ribosomal protein S14</fullName>
    </alternativeName>
</protein>
<reference key="1">
    <citation type="journal article" date="2002" name="Lancet">
        <title>Genome and virulence determinants of high virulence community-acquired MRSA.</title>
        <authorList>
            <person name="Baba T."/>
            <person name="Takeuchi F."/>
            <person name="Kuroda M."/>
            <person name="Yuzawa H."/>
            <person name="Aoki K."/>
            <person name="Oguchi A."/>
            <person name="Nagai Y."/>
            <person name="Iwama N."/>
            <person name="Asano K."/>
            <person name="Naimi T."/>
            <person name="Kuroda H."/>
            <person name="Cui L."/>
            <person name="Yamamoto K."/>
            <person name="Hiramatsu K."/>
        </authorList>
    </citation>
    <scope>NUCLEOTIDE SEQUENCE [LARGE SCALE GENOMIC DNA]</scope>
    <source>
        <strain>MW2</strain>
    </source>
</reference>
<accession>P66416</accession>
<accession>Q99UE0</accession>
<organism>
    <name type="scientific">Staphylococcus aureus (strain MW2)</name>
    <dbReference type="NCBI Taxonomy" id="196620"/>
    <lineage>
        <taxon>Bacteria</taxon>
        <taxon>Bacillati</taxon>
        <taxon>Bacillota</taxon>
        <taxon>Bacilli</taxon>
        <taxon>Bacillales</taxon>
        <taxon>Staphylococcaceae</taxon>
        <taxon>Staphylococcus</taxon>
    </lineage>
</organism>
<dbReference type="EMBL" id="BA000033">
    <property type="protein sequence ID" value="BAB95088.1"/>
    <property type="molecule type" value="Genomic_DNA"/>
</dbReference>
<dbReference type="RefSeq" id="WP_001085655.1">
    <property type="nucleotide sequence ID" value="NC_003923.1"/>
</dbReference>
<dbReference type="SMR" id="P66416"/>
<dbReference type="GeneID" id="98345705"/>
<dbReference type="KEGG" id="sam:MW1223"/>
<dbReference type="HOGENOM" id="CLU_139869_0_0_9"/>
<dbReference type="GO" id="GO:0005737">
    <property type="term" value="C:cytoplasm"/>
    <property type="evidence" value="ECO:0007669"/>
    <property type="project" value="UniProtKB-ARBA"/>
</dbReference>
<dbReference type="GO" id="GO:0015935">
    <property type="term" value="C:small ribosomal subunit"/>
    <property type="evidence" value="ECO:0007669"/>
    <property type="project" value="TreeGrafter"/>
</dbReference>
<dbReference type="GO" id="GO:0019843">
    <property type="term" value="F:rRNA binding"/>
    <property type="evidence" value="ECO:0007669"/>
    <property type="project" value="UniProtKB-UniRule"/>
</dbReference>
<dbReference type="GO" id="GO:0003735">
    <property type="term" value="F:structural constituent of ribosome"/>
    <property type="evidence" value="ECO:0007669"/>
    <property type="project" value="InterPro"/>
</dbReference>
<dbReference type="GO" id="GO:0006412">
    <property type="term" value="P:translation"/>
    <property type="evidence" value="ECO:0007669"/>
    <property type="project" value="UniProtKB-UniRule"/>
</dbReference>
<dbReference type="FunFam" id="4.10.830.10:FF:000003">
    <property type="entry name" value="30S ribosomal protein S14"/>
    <property type="match status" value="1"/>
</dbReference>
<dbReference type="Gene3D" id="4.10.830.10">
    <property type="entry name" value="30s Ribosomal Protein S14, Chain N"/>
    <property type="match status" value="1"/>
</dbReference>
<dbReference type="HAMAP" id="MF_00537">
    <property type="entry name" value="Ribosomal_uS14_1"/>
    <property type="match status" value="1"/>
</dbReference>
<dbReference type="InterPro" id="IPR001209">
    <property type="entry name" value="Ribosomal_uS14"/>
</dbReference>
<dbReference type="InterPro" id="IPR023036">
    <property type="entry name" value="Ribosomal_uS14_bac/plastid"/>
</dbReference>
<dbReference type="InterPro" id="IPR018271">
    <property type="entry name" value="Ribosomal_uS14_CS"/>
</dbReference>
<dbReference type="InterPro" id="IPR043140">
    <property type="entry name" value="Ribosomal_uS14_sf"/>
</dbReference>
<dbReference type="NCBIfam" id="NF006477">
    <property type="entry name" value="PRK08881.1"/>
    <property type="match status" value="1"/>
</dbReference>
<dbReference type="PANTHER" id="PTHR19836">
    <property type="entry name" value="30S RIBOSOMAL PROTEIN S14"/>
    <property type="match status" value="1"/>
</dbReference>
<dbReference type="PANTHER" id="PTHR19836:SF19">
    <property type="entry name" value="SMALL RIBOSOMAL SUBUNIT PROTEIN US14M"/>
    <property type="match status" value="1"/>
</dbReference>
<dbReference type="Pfam" id="PF00253">
    <property type="entry name" value="Ribosomal_S14"/>
    <property type="match status" value="1"/>
</dbReference>
<dbReference type="SUPFAM" id="SSF57716">
    <property type="entry name" value="Glucocorticoid receptor-like (DNA-binding domain)"/>
    <property type="match status" value="1"/>
</dbReference>
<dbReference type="PROSITE" id="PS00527">
    <property type="entry name" value="RIBOSOMAL_S14"/>
    <property type="match status" value="1"/>
</dbReference>
<keyword id="KW-0687">Ribonucleoprotein</keyword>
<keyword id="KW-0689">Ribosomal protein</keyword>
<keyword id="KW-0694">RNA-binding</keyword>
<keyword id="KW-0699">rRNA-binding</keyword>
<sequence length="89" mass="10540">MAKKSKIAKERKREELVNKYYELRKELKAKGDYEALRKLPRDSSPTRLTRRCKVTGRPRGVLRKFEMSRIAFREHAHKGQIPGVKKSSW</sequence>